<proteinExistence type="inferred from homology"/>
<keyword id="KW-0963">Cytoplasm</keyword>
<keyword id="KW-1185">Reference proteome</keyword>
<keyword id="KW-0808">Transferase</keyword>
<organism>
    <name type="scientific">Schizosaccharomyces pombe (strain 972 / ATCC 24843)</name>
    <name type="common">Fission yeast</name>
    <dbReference type="NCBI Taxonomy" id="284812"/>
    <lineage>
        <taxon>Eukaryota</taxon>
        <taxon>Fungi</taxon>
        <taxon>Dikarya</taxon>
        <taxon>Ascomycota</taxon>
        <taxon>Taphrinomycotina</taxon>
        <taxon>Schizosaccharomycetes</taxon>
        <taxon>Schizosaccharomycetales</taxon>
        <taxon>Schizosaccharomycetaceae</taxon>
        <taxon>Schizosaccharomyces</taxon>
    </lineage>
</organism>
<gene>
    <name type="ORF">SPCC1183.02</name>
</gene>
<comment type="function">
    <text evidence="1">Involved in the oxidative stress response and detoxification.</text>
</comment>
<comment type="catalytic activity">
    <reaction>
        <text>RX + glutathione = an S-substituted glutathione + a halide anion + H(+)</text>
        <dbReference type="Rhea" id="RHEA:16437"/>
        <dbReference type="ChEBI" id="CHEBI:15378"/>
        <dbReference type="ChEBI" id="CHEBI:16042"/>
        <dbReference type="ChEBI" id="CHEBI:17792"/>
        <dbReference type="ChEBI" id="CHEBI:57925"/>
        <dbReference type="ChEBI" id="CHEBI:90779"/>
        <dbReference type="EC" id="2.5.1.18"/>
    </reaction>
</comment>
<comment type="subcellular location">
    <subcellularLocation>
        <location evidence="2">Cytoplasm</location>
    </subcellularLocation>
</comment>
<comment type="similarity">
    <text evidence="3">Belongs to the GST superfamily.</text>
</comment>
<protein>
    <recommendedName>
        <fullName>Putative glutathione S-transferase C1183.02</fullName>
        <ecNumber>2.5.1.18</ecNumber>
    </recommendedName>
</protein>
<name>YC12_SCHPO</name>
<evidence type="ECO:0000250" key="1"/>
<evidence type="ECO:0000269" key="2">
    <source>
    </source>
</evidence>
<evidence type="ECO:0000305" key="3"/>
<dbReference type="EC" id="2.5.1.18"/>
<dbReference type="EMBL" id="CU329672">
    <property type="protein sequence ID" value="CAA21082.1"/>
    <property type="molecule type" value="Genomic_DNA"/>
</dbReference>
<dbReference type="PIR" id="T40842">
    <property type="entry name" value="T40842"/>
</dbReference>
<dbReference type="RefSeq" id="NP_587885.1">
    <property type="nucleotide sequence ID" value="NM_001022877.2"/>
</dbReference>
<dbReference type="SMR" id="O74830"/>
<dbReference type="BioGRID" id="275588">
    <property type="interactions" value="7"/>
</dbReference>
<dbReference type="FunCoup" id="O74830">
    <property type="interactions" value="199"/>
</dbReference>
<dbReference type="STRING" id="284812.O74830"/>
<dbReference type="iPTMnet" id="O74830"/>
<dbReference type="PaxDb" id="4896-SPCC1183.02.1"/>
<dbReference type="EnsemblFungi" id="SPCC1183.02.1">
    <property type="protein sequence ID" value="SPCC1183.02.1:pep"/>
    <property type="gene ID" value="SPCC1183.02"/>
</dbReference>
<dbReference type="KEGG" id="spo:2539015"/>
<dbReference type="PomBase" id="SPCC1183.02"/>
<dbReference type="VEuPathDB" id="FungiDB:SPCC1183.02"/>
<dbReference type="eggNOG" id="KOG0867">
    <property type="taxonomic scope" value="Eukaryota"/>
</dbReference>
<dbReference type="HOGENOM" id="CLU_011226_3_2_1"/>
<dbReference type="InParanoid" id="O74830"/>
<dbReference type="OMA" id="VETYPHK"/>
<dbReference type="PhylomeDB" id="O74830"/>
<dbReference type="Reactome" id="R-SPO-156842">
    <property type="pathway name" value="Eukaryotic Translation Elongation"/>
</dbReference>
<dbReference type="PRO" id="PR:O74830"/>
<dbReference type="Proteomes" id="UP000002485">
    <property type="component" value="Chromosome III"/>
</dbReference>
<dbReference type="GO" id="GO:0005737">
    <property type="term" value="C:cytoplasm"/>
    <property type="evidence" value="ECO:0000318"/>
    <property type="project" value="GO_Central"/>
</dbReference>
<dbReference type="GO" id="GO:0005829">
    <property type="term" value="C:cytosol"/>
    <property type="evidence" value="ECO:0007005"/>
    <property type="project" value="PomBase"/>
</dbReference>
<dbReference type="GO" id="GO:0005634">
    <property type="term" value="C:nucleus"/>
    <property type="evidence" value="ECO:0000318"/>
    <property type="project" value="GO_Central"/>
</dbReference>
<dbReference type="GO" id="GO:0004364">
    <property type="term" value="F:glutathione transferase activity"/>
    <property type="evidence" value="ECO:0000255"/>
    <property type="project" value="PomBase"/>
</dbReference>
<dbReference type="GO" id="GO:0002182">
    <property type="term" value="P:cytoplasmic translational elongation"/>
    <property type="evidence" value="ECO:0000250"/>
    <property type="project" value="PomBase"/>
</dbReference>
<dbReference type="CDD" id="cd03181">
    <property type="entry name" value="GST_C_EF1Bgamma_like"/>
    <property type="match status" value="1"/>
</dbReference>
<dbReference type="CDD" id="cd03044">
    <property type="entry name" value="GST_N_EF1Bgamma"/>
    <property type="match status" value="1"/>
</dbReference>
<dbReference type="FunFam" id="3.40.30.10:FF:000142">
    <property type="entry name" value="Elongation factor 1 gamma"/>
    <property type="match status" value="1"/>
</dbReference>
<dbReference type="Gene3D" id="1.20.1050.10">
    <property type="match status" value="1"/>
</dbReference>
<dbReference type="Gene3D" id="3.40.30.10">
    <property type="entry name" value="Glutaredoxin"/>
    <property type="match status" value="1"/>
</dbReference>
<dbReference type="InterPro" id="IPR050802">
    <property type="entry name" value="EF-GSTs"/>
</dbReference>
<dbReference type="InterPro" id="IPR010987">
    <property type="entry name" value="Glutathione-S-Trfase_C-like"/>
</dbReference>
<dbReference type="InterPro" id="IPR036282">
    <property type="entry name" value="Glutathione-S-Trfase_C_sf"/>
</dbReference>
<dbReference type="InterPro" id="IPR004045">
    <property type="entry name" value="Glutathione_S-Trfase_N"/>
</dbReference>
<dbReference type="InterPro" id="IPR004046">
    <property type="entry name" value="GST_C"/>
</dbReference>
<dbReference type="InterPro" id="IPR036249">
    <property type="entry name" value="Thioredoxin-like_sf"/>
</dbReference>
<dbReference type="PANTHER" id="PTHR43986">
    <property type="entry name" value="ELONGATION FACTOR 1-GAMMA"/>
    <property type="match status" value="1"/>
</dbReference>
<dbReference type="PANTHER" id="PTHR43986:SF1">
    <property type="entry name" value="ELONGATION FACTOR 1-GAMMA"/>
    <property type="match status" value="1"/>
</dbReference>
<dbReference type="Pfam" id="PF00043">
    <property type="entry name" value="GST_C"/>
    <property type="match status" value="1"/>
</dbReference>
<dbReference type="Pfam" id="PF02798">
    <property type="entry name" value="GST_N"/>
    <property type="match status" value="1"/>
</dbReference>
<dbReference type="SUPFAM" id="SSF47616">
    <property type="entry name" value="GST C-terminal domain-like"/>
    <property type="match status" value="1"/>
</dbReference>
<dbReference type="SUPFAM" id="SSF52833">
    <property type="entry name" value="Thioredoxin-like"/>
    <property type="match status" value="1"/>
</dbReference>
<dbReference type="PROSITE" id="PS50405">
    <property type="entry name" value="GST_CTER"/>
    <property type="match status" value="1"/>
</dbReference>
<dbReference type="PROSITE" id="PS50404">
    <property type="entry name" value="GST_NTER"/>
    <property type="match status" value="1"/>
</dbReference>
<reference key="1">
    <citation type="journal article" date="2002" name="Nature">
        <title>The genome sequence of Schizosaccharomyces pombe.</title>
        <authorList>
            <person name="Wood V."/>
            <person name="Gwilliam R."/>
            <person name="Rajandream M.A."/>
            <person name="Lyne M.H."/>
            <person name="Lyne R."/>
            <person name="Stewart A."/>
            <person name="Sgouros J.G."/>
            <person name="Peat N."/>
            <person name="Hayles J."/>
            <person name="Baker S.G."/>
            <person name="Basham D."/>
            <person name="Bowman S."/>
            <person name="Brooks K."/>
            <person name="Brown D."/>
            <person name="Brown S."/>
            <person name="Chillingworth T."/>
            <person name="Churcher C.M."/>
            <person name="Collins M."/>
            <person name="Connor R."/>
            <person name="Cronin A."/>
            <person name="Davis P."/>
            <person name="Feltwell T."/>
            <person name="Fraser A."/>
            <person name="Gentles S."/>
            <person name="Goble A."/>
            <person name="Hamlin N."/>
            <person name="Harris D.E."/>
            <person name="Hidalgo J."/>
            <person name="Hodgson G."/>
            <person name="Holroyd S."/>
            <person name="Hornsby T."/>
            <person name="Howarth S."/>
            <person name="Huckle E.J."/>
            <person name="Hunt S."/>
            <person name="Jagels K."/>
            <person name="James K.D."/>
            <person name="Jones L."/>
            <person name="Jones M."/>
            <person name="Leather S."/>
            <person name="McDonald S."/>
            <person name="McLean J."/>
            <person name="Mooney P."/>
            <person name="Moule S."/>
            <person name="Mungall K.L."/>
            <person name="Murphy L.D."/>
            <person name="Niblett D."/>
            <person name="Odell C."/>
            <person name="Oliver K."/>
            <person name="O'Neil S."/>
            <person name="Pearson D."/>
            <person name="Quail M.A."/>
            <person name="Rabbinowitsch E."/>
            <person name="Rutherford K.M."/>
            <person name="Rutter S."/>
            <person name="Saunders D."/>
            <person name="Seeger K."/>
            <person name="Sharp S."/>
            <person name="Skelton J."/>
            <person name="Simmonds M.N."/>
            <person name="Squares R."/>
            <person name="Squares S."/>
            <person name="Stevens K."/>
            <person name="Taylor K."/>
            <person name="Taylor R.G."/>
            <person name="Tivey A."/>
            <person name="Walsh S.V."/>
            <person name="Warren T."/>
            <person name="Whitehead S."/>
            <person name="Woodward J.R."/>
            <person name="Volckaert G."/>
            <person name="Aert R."/>
            <person name="Robben J."/>
            <person name="Grymonprez B."/>
            <person name="Weltjens I."/>
            <person name="Vanstreels E."/>
            <person name="Rieger M."/>
            <person name="Schaefer M."/>
            <person name="Mueller-Auer S."/>
            <person name="Gabel C."/>
            <person name="Fuchs M."/>
            <person name="Duesterhoeft A."/>
            <person name="Fritzc C."/>
            <person name="Holzer E."/>
            <person name="Moestl D."/>
            <person name="Hilbert H."/>
            <person name="Borzym K."/>
            <person name="Langer I."/>
            <person name="Beck A."/>
            <person name="Lehrach H."/>
            <person name="Reinhardt R."/>
            <person name="Pohl T.M."/>
            <person name="Eger P."/>
            <person name="Zimmermann W."/>
            <person name="Wedler H."/>
            <person name="Wambutt R."/>
            <person name="Purnelle B."/>
            <person name="Goffeau A."/>
            <person name="Cadieu E."/>
            <person name="Dreano S."/>
            <person name="Gloux S."/>
            <person name="Lelaure V."/>
            <person name="Mottier S."/>
            <person name="Galibert F."/>
            <person name="Aves S.J."/>
            <person name="Xiang Z."/>
            <person name="Hunt C."/>
            <person name="Moore K."/>
            <person name="Hurst S.M."/>
            <person name="Lucas M."/>
            <person name="Rochet M."/>
            <person name="Gaillardin C."/>
            <person name="Tallada V.A."/>
            <person name="Garzon A."/>
            <person name="Thode G."/>
            <person name="Daga R.R."/>
            <person name="Cruzado L."/>
            <person name="Jimenez J."/>
            <person name="Sanchez M."/>
            <person name="del Rey F."/>
            <person name="Benito J."/>
            <person name="Dominguez A."/>
            <person name="Revuelta J.L."/>
            <person name="Moreno S."/>
            <person name="Armstrong J."/>
            <person name="Forsburg S.L."/>
            <person name="Cerutti L."/>
            <person name="Lowe T."/>
            <person name="McCombie W.R."/>
            <person name="Paulsen I."/>
            <person name="Potashkin J."/>
            <person name="Shpakovski G.V."/>
            <person name="Ussery D."/>
            <person name="Barrell B.G."/>
            <person name="Nurse P."/>
        </authorList>
    </citation>
    <scope>NUCLEOTIDE SEQUENCE [LARGE SCALE GENOMIC DNA]</scope>
    <source>
        <strain>972 / ATCC 24843</strain>
    </source>
</reference>
<reference key="2">
    <citation type="journal article" date="2006" name="Nat. Biotechnol.">
        <title>ORFeome cloning and global analysis of protein localization in the fission yeast Schizosaccharomyces pombe.</title>
        <authorList>
            <person name="Matsuyama A."/>
            <person name="Arai R."/>
            <person name="Yashiroda Y."/>
            <person name="Shirai A."/>
            <person name="Kamata A."/>
            <person name="Sekido S."/>
            <person name="Kobayashi Y."/>
            <person name="Hashimoto A."/>
            <person name="Hamamoto M."/>
            <person name="Hiraoka Y."/>
            <person name="Horinouchi S."/>
            <person name="Yoshida M."/>
        </authorList>
    </citation>
    <scope>SUBCELLULAR LOCATION [LARGE SCALE ANALYSIS]</scope>
</reference>
<feature type="chain" id="PRO_0000316037" description="Putative glutathione S-transferase C1183.02">
    <location>
        <begin position="1"/>
        <end position="220"/>
    </location>
</feature>
<feature type="domain" description="GST N-terminal">
    <location>
        <begin position="2"/>
        <end position="81"/>
    </location>
</feature>
<feature type="domain" description="GST C-terminal">
    <location>
        <begin position="89"/>
        <end position="216"/>
    </location>
</feature>
<sequence length="220" mass="25504">MFLGTLYSFKTNTRTVCLLELAKLLDLQVDLVETYPHKFSADLAAKFPLQKLPVFIGADGFELSEVIAIVKYFYEKGKHNDKEGLGPVNEVEEAEMLKWMCFINFDIVTPQNVRPWVGMFRGNIPYEEKPFKESATRAIDSLKIPNELVKDRTYLVGDRFTLADLFFGSLLRIFFNSIIDEKTRKELPHLTRYYITMFHQAKLETYFPLELPLTVTVAKK</sequence>
<accession>O74830</accession>